<name>IPYR_ECOL6</name>
<proteinExistence type="inferred from homology"/>
<sequence length="176" mass="19732">MSLLNVPAGKDLPEDIYVVIEIPANADPIKYEIDKESGALFVDRFMSTAMFYPCNYGYINHTLSLDGDPVDVLVPTPYPLQPGSVIRCRPVGVLKMTDEAGEDAKLIAVPHTKLSKEYDHIKDVNDLPELLKAQIAHFFEHYKDLEKGKWVKVEGWENAEAAKAEIVASFERAKNK</sequence>
<dbReference type="EC" id="3.6.1.1" evidence="2"/>
<dbReference type="EMBL" id="AE014075">
    <property type="protein sequence ID" value="AAN83744.1"/>
    <property type="molecule type" value="Genomic_DNA"/>
</dbReference>
<dbReference type="RefSeq" id="WP_000055072.1">
    <property type="nucleotide sequence ID" value="NZ_CP051263.1"/>
</dbReference>
<dbReference type="SMR" id="Q8FAG0"/>
<dbReference type="STRING" id="199310.c5323"/>
<dbReference type="GeneID" id="75202465"/>
<dbReference type="KEGG" id="ecc:c5323"/>
<dbReference type="eggNOG" id="COG0221">
    <property type="taxonomic scope" value="Bacteria"/>
</dbReference>
<dbReference type="HOGENOM" id="CLU_073198_1_0_6"/>
<dbReference type="BioCyc" id="ECOL199310:C5323-MONOMER"/>
<dbReference type="Proteomes" id="UP000001410">
    <property type="component" value="Chromosome"/>
</dbReference>
<dbReference type="GO" id="GO:0005737">
    <property type="term" value="C:cytoplasm"/>
    <property type="evidence" value="ECO:0007669"/>
    <property type="project" value="UniProtKB-SubCell"/>
</dbReference>
<dbReference type="GO" id="GO:0004427">
    <property type="term" value="F:inorganic diphosphate phosphatase activity"/>
    <property type="evidence" value="ECO:0007669"/>
    <property type="project" value="UniProtKB-UniRule"/>
</dbReference>
<dbReference type="GO" id="GO:0000287">
    <property type="term" value="F:magnesium ion binding"/>
    <property type="evidence" value="ECO:0007669"/>
    <property type="project" value="UniProtKB-UniRule"/>
</dbReference>
<dbReference type="GO" id="GO:0006796">
    <property type="term" value="P:phosphate-containing compound metabolic process"/>
    <property type="evidence" value="ECO:0007669"/>
    <property type="project" value="InterPro"/>
</dbReference>
<dbReference type="CDD" id="cd00412">
    <property type="entry name" value="pyrophosphatase"/>
    <property type="match status" value="1"/>
</dbReference>
<dbReference type="FunFam" id="3.90.80.10:FF:000001">
    <property type="entry name" value="Inorganic pyrophosphatase"/>
    <property type="match status" value="1"/>
</dbReference>
<dbReference type="Gene3D" id="3.90.80.10">
    <property type="entry name" value="Inorganic pyrophosphatase"/>
    <property type="match status" value="1"/>
</dbReference>
<dbReference type="HAMAP" id="MF_00209">
    <property type="entry name" value="Inorganic_PPase"/>
    <property type="match status" value="1"/>
</dbReference>
<dbReference type="InterPro" id="IPR008162">
    <property type="entry name" value="Pyrophosphatase"/>
</dbReference>
<dbReference type="InterPro" id="IPR036649">
    <property type="entry name" value="Pyrophosphatase_sf"/>
</dbReference>
<dbReference type="NCBIfam" id="NF002317">
    <property type="entry name" value="PRK01250.1"/>
    <property type="match status" value="1"/>
</dbReference>
<dbReference type="PANTHER" id="PTHR10286">
    <property type="entry name" value="INORGANIC PYROPHOSPHATASE"/>
    <property type="match status" value="1"/>
</dbReference>
<dbReference type="Pfam" id="PF00719">
    <property type="entry name" value="Pyrophosphatase"/>
    <property type="match status" value="1"/>
</dbReference>
<dbReference type="SUPFAM" id="SSF50324">
    <property type="entry name" value="Inorganic pyrophosphatase"/>
    <property type="match status" value="1"/>
</dbReference>
<dbReference type="PROSITE" id="PS00387">
    <property type="entry name" value="PPASE"/>
    <property type="match status" value="1"/>
</dbReference>
<evidence type="ECO:0000250" key="1"/>
<evidence type="ECO:0000255" key="2">
    <source>
        <dbReference type="HAMAP-Rule" id="MF_00209"/>
    </source>
</evidence>
<feature type="initiator methionine" description="Removed" evidence="1">
    <location>
        <position position="1"/>
    </location>
</feature>
<feature type="chain" id="PRO_0000137497" description="Inorganic pyrophosphatase">
    <location>
        <begin position="2"/>
        <end position="176"/>
    </location>
</feature>
<feature type="binding site" evidence="2">
    <location>
        <position position="30"/>
    </location>
    <ligand>
        <name>substrate</name>
    </ligand>
</feature>
<feature type="binding site" evidence="2">
    <location>
        <position position="44"/>
    </location>
    <ligand>
        <name>substrate</name>
    </ligand>
</feature>
<feature type="binding site" evidence="2">
    <location>
        <position position="56"/>
    </location>
    <ligand>
        <name>substrate</name>
    </ligand>
</feature>
<feature type="binding site" evidence="2">
    <location>
        <position position="66"/>
    </location>
    <ligand>
        <name>Mg(2+)</name>
        <dbReference type="ChEBI" id="CHEBI:18420"/>
        <label>1</label>
    </ligand>
</feature>
<feature type="binding site" evidence="2">
    <location>
        <position position="71"/>
    </location>
    <ligand>
        <name>Mg(2+)</name>
        <dbReference type="ChEBI" id="CHEBI:18420"/>
        <label>1</label>
    </ligand>
</feature>
<feature type="binding site" evidence="2">
    <location>
        <position position="71"/>
    </location>
    <ligand>
        <name>Mg(2+)</name>
        <dbReference type="ChEBI" id="CHEBI:18420"/>
        <label>2</label>
    </ligand>
</feature>
<feature type="binding site" evidence="2">
    <location>
        <position position="103"/>
    </location>
    <ligand>
        <name>Mg(2+)</name>
        <dbReference type="ChEBI" id="CHEBI:18420"/>
        <label>1</label>
    </ligand>
</feature>
<feature type="binding site" evidence="2">
    <location>
        <position position="142"/>
    </location>
    <ligand>
        <name>substrate</name>
    </ligand>
</feature>
<protein>
    <recommendedName>
        <fullName evidence="2">Inorganic pyrophosphatase</fullName>
        <ecNumber evidence="2">3.6.1.1</ecNumber>
    </recommendedName>
    <alternativeName>
        <fullName evidence="2">Pyrophosphate phospho-hydrolase</fullName>
        <shortName evidence="2">PPase</shortName>
    </alternativeName>
</protein>
<accession>Q8FAG0</accession>
<organism>
    <name type="scientific">Escherichia coli O6:H1 (strain CFT073 / ATCC 700928 / UPEC)</name>
    <dbReference type="NCBI Taxonomy" id="199310"/>
    <lineage>
        <taxon>Bacteria</taxon>
        <taxon>Pseudomonadati</taxon>
        <taxon>Pseudomonadota</taxon>
        <taxon>Gammaproteobacteria</taxon>
        <taxon>Enterobacterales</taxon>
        <taxon>Enterobacteriaceae</taxon>
        <taxon>Escherichia</taxon>
    </lineage>
</organism>
<reference key="1">
    <citation type="journal article" date="2002" name="Proc. Natl. Acad. Sci. U.S.A.">
        <title>Extensive mosaic structure revealed by the complete genome sequence of uropathogenic Escherichia coli.</title>
        <authorList>
            <person name="Welch R.A."/>
            <person name="Burland V."/>
            <person name="Plunkett G. III"/>
            <person name="Redford P."/>
            <person name="Roesch P."/>
            <person name="Rasko D."/>
            <person name="Buckles E.L."/>
            <person name="Liou S.-R."/>
            <person name="Boutin A."/>
            <person name="Hackett J."/>
            <person name="Stroud D."/>
            <person name="Mayhew G.F."/>
            <person name="Rose D.J."/>
            <person name="Zhou S."/>
            <person name="Schwartz D.C."/>
            <person name="Perna N.T."/>
            <person name="Mobley H.L.T."/>
            <person name="Donnenberg M.S."/>
            <person name="Blattner F.R."/>
        </authorList>
    </citation>
    <scope>NUCLEOTIDE SEQUENCE [LARGE SCALE GENOMIC DNA]</scope>
    <source>
        <strain>CFT073 / ATCC 700928 / UPEC</strain>
    </source>
</reference>
<gene>
    <name evidence="2" type="primary">ppa</name>
    <name type="ordered locus">c5323</name>
</gene>
<keyword id="KW-0963">Cytoplasm</keyword>
<keyword id="KW-0378">Hydrolase</keyword>
<keyword id="KW-0460">Magnesium</keyword>
<keyword id="KW-0479">Metal-binding</keyword>
<keyword id="KW-1185">Reference proteome</keyword>
<comment type="function">
    <text evidence="2">Catalyzes the hydrolysis of inorganic pyrophosphate (PPi) forming two phosphate ions.</text>
</comment>
<comment type="catalytic activity">
    <reaction evidence="2">
        <text>diphosphate + H2O = 2 phosphate + H(+)</text>
        <dbReference type="Rhea" id="RHEA:24576"/>
        <dbReference type="ChEBI" id="CHEBI:15377"/>
        <dbReference type="ChEBI" id="CHEBI:15378"/>
        <dbReference type="ChEBI" id="CHEBI:33019"/>
        <dbReference type="ChEBI" id="CHEBI:43474"/>
        <dbReference type="EC" id="3.6.1.1"/>
    </reaction>
</comment>
<comment type="cofactor">
    <cofactor evidence="2">
        <name>Mg(2+)</name>
        <dbReference type="ChEBI" id="CHEBI:18420"/>
    </cofactor>
</comment>
<comment type="subunit">
    <text evidence="2">Homohexamer.</text>
</comment>
<comment type="subcellular location">
    <subcellularLocation>
        <location evidence="2">Cytoplasm</location>
    </subcellularLocation>
</comment>
<comment type="similarity">
    <text evidence="2">Belongs to the PPase family.</text>
</comment>